<comment type="function">
    <text evidence="1 4">PUMPS are mitochondrial transporter proteins that create proton leaks across the inner mitochondrial membrane, thus uncoupling oxidative phosphorylation. This leads to a decrease in the efficiency of oxidative phosphorylation and an increase in heat production. May be involved in protecting plant cells against oxidative stress damage (By similarity). Recombinant PUMP4, reconstituted into liposomes, transports a wide range of dicarboxylic acids including malate, oxaloacetate and succinate as well as phosphate, sulfate and thiosulfate. However, it is unknown if these transports are of any biological significance in vivo.</text>
</comment>
<comment type="subcellular location">
    <subcellularLocation>
        <location evidence="1">Mitochondrion inner membrane</location>
        <topology evidence="1">Multi-pass membrane protein</topology>
    </subcellularLocation>
</comment>
<comment type="tissue specificity">
    <text evidence="3 4">Expressed in roots, leaves, stems and flowers.</text>
</comment>
<comment type="induction">
    <text evidence="3">By cold stress.</text>
</comment>
<comment type="similarity">
    <text evidence="5">Belongs to the mitochondrial carrier (TC 2.A.29) family.</text>
</comment>
<sequence length="313" mass="32873">MGVKSFVEGGIASVIAGCSTHPLDLIKVRLQLHGEAPSTTTVTLLRPALAFPNSSPAAFLETTSSVPKVGPISLGINIVKSEGAAALFSGVSATLLRQTLYSTTRMGLYEVLKNKWTDPESGKLNLSRKIGAGLVAGGIGAAVGNPADVAMVRMQADGRLPLAQRRNYAGVGDAIRSMVKGEGVTSLWRGSALTINRAMIVTAAQLASYDQFKEGILENGVMNDGLGTHVVASFAAGFVASVASNPVDVIKTRVMNMKVGAYDGAWDCAVKTVKAEGAMALYKGFVPTVCRQGPFTVVLFVTLEQVRKLLRDF</sequence>
<keyword id="KW-0472">Membrane</keyword>
<keyword id="KW-0496">Mitochondrion</keyword>
<keyword id="KW-0999">Mitochondrion inner membrane</keyword>
<keyword id="KW-1185">Reference proteome</keyword>
<keyword id="KW-0677">Repeat</keyword>
<keyword id="KW-0346">Stress response</keyword>
<keyword id="KW-0812">Transmembrane</keyword>
<keyword id="KW-1133">Transmembrane helix</keyword>
<keyword id="KW-0813">Transport</keyword>
<gene>
    <name type="primary">PUMP4</name>
    <name type="synonym">DIC2</name>
    <name type="synonym">UCP4</name>
    <name type="ordered locus">At4g24570</name>
    <name type="ORF">F22K18.230</name>
</gene>
<name>PUMP4_ARATH</name>
<proteinExistence type="evidence at transcript level"/>
<dbReference type="EMBL" id="AM236863">
    <property type="protein sequence ID" value="CAJ86455.1"/>
    <property type="molecule type" value="mRNA"/>
</dbReference>
<dbReference type="EMBL" id="AL035356">
    <property type="protein sequence ID" value="CAA23006.1"/>
    <property type="molecule type" value="Genomic_DNA"/>
</dbReference>
<dbReference type="EMBL" id="AL161561">
    <property type="protein sequence ID" value="CAB79367.1"/>
    <property type="molecule type" value="Genomic_DNA"/>
</dbReference>
<dbReference type="EMBL" id="CP002687">
    <property type="protein sequence ID" value="AEE84927.1"/>
    <property type="molecule type" value="Genomic_DNA"/>
</dbReference>
<dbReference type="EMBL" id="AY042859">
    <property type="protein sequence ID" value="AAK68799.1"/>
    <property type="molecule type" value="mRNA"/>
</dbReference>
<dbReference type="EMBL" id="BT008712">
    <property type="protein sequence ID" value="AAP42725.1"/>
    <property type="molecule type" value="mRNA"/>
</dbReference>
<dbReference type="EMBL" id="AY084853">
    <property type="protein sequence ID" value="AAM61418.1"/>
    <property type="molecule type" value="mRNA"/>
</dbReference>
<dbReference type="PIR" id="T05577">
    <property type="entry name" value="T05577"/>
</dbReference>
<dbReference type="RefSeq" id="NP_194188.1">
    <property type="nucleotide sequence ID" value="NM_118590.2"/>
</dbReference>
<dbReference type="SMR" id="Q9SB52"/>
<dbReference type="BioGRID" id="13848">
    <property type="interactions" value="1"/>
</dbReference>
<dbReference type="FunCoup" id="Q9SB52">
    <property type="interactions" value="521"/>
</dbReference>
<dbReference type="STRING" id="3702.Q9SB52"/>
<dbReference type="iPTMnet" id="Q9SB52"/>
<dbReference type="PaxDb" id="3702-AT4G24570.1"/>
<dbReference type="ProteomicsDB" id="226125"/>
<dbReference type="EnsemblPlants" id="AT4G24570.1">
    <property type="protein sequence ID" value="AT4G24570.1"/>
    <property type="gene ID" value="AT4G24570"/>
</dbReference>
<dbReference type="GeneID" id="828559"/>
<dbReference type="Gramene" id="AT4G24570.1">
    <property type="protein sequence ID" value="AT4G24570.1"/>
    <property type="gene ID" value="AT4G24570"/>
</dbReference>
<dbReference type="KEGG" id="ath:AT4G24570"/>
<dbReference type="Araport" id="AT4G24570"/>
<dbReference type="TAIR" id="AT4G24570">
    <property type="gene designation" value="DIC2"/>
</dbReference>
<dbReference type="eggNOG" id="KOG0759">
    <property type="taxonomic scope" value="Eukaryota"/>
</dbReference>
<dbReference type="HOGENOM" id="CLU_015166_14_1_1"/>
<dbReference type="InParanoid" id="Q9SB52"/>
<dbReference type="OMA" id="IMPALNW"/>
<dbReference type="OrthoDB" id="6703404at2759"/>
<dbReference type="PhylomeDB" id="Q9SB52"/>
<dbReference type="PRO" id="PR:Q9SB52"/>
<dbReference type="Proteomes" id="UP000006548">
    <property type="component" value="Chromosome 4"/>
</dbReference>
<dbReference type="ExpressionAtlas" id="Q9SB52">
    <property type="expression patterns" value="baseline and differential"/>
</dbReference>
<dbReference type="GO" id="GO:0005743">
    <property type="term" value="C:mitochondrial inner membrane"/>
    <property type="evidence" value="ECO:0007669"/>
    <property type="project" value="UniProtKB-SubCell"/>
</dbReference>
<dbReference type="GO" id="GO:0005310">
    <property type="term" value="F:dicarboxylic acid transmembrane transporter activity"/>
    <property type="evidence" value="ECO:0000314"/>
    <property type="project" value="TAIR"/>
</dbReference>
<dbReference type="GO" id="GO:0071456">
    <property type="term" value="P:cellular response to hypoxia"/>
    <property type="evidence" value="ECO:0007007"/>
    <property type="project" value="TAIR"/>
</dbReference>
<dbReference type="GO" id="GO:0006839">
    <property type="term" value="P:mitochondrial transport"/>
    <property type="evidence" value="ECO:0000314"/>
    <property type="project" value="TAIR"/>
</dbReference>
<dbReference type="FunFam" id="1.50.40.10:FF:000030">
    <property type="entry name" value="Mitochondrial uncoupling protein 5"/>
    <property type="match status" value="1"/>
</dbReference>
<dbReference type="Gene3D" id="1.50.40.10">
    <property type="entry name" value="Mitochondrial carrier domain"/>
    <property type="match status" value="1"/>
</dbReference>
<dbReference type="InterPro" id="IPR002067">
    <property type="entry name" value="Mit_carrier"/>
</dbReference>
<dbReference type="InterPro" id="IPR050391">
    <property type="entry name" value="Mito_Metabolite_Transporter"/>
</dbReference>
<dbReference type="InterPro" id="IPR018108">
    <property type="entry name" value="Mitochondrial_sb/sol_carrier"/>
</dbReference>
<dbReference type="InterPro" id="IPR023395">
    <property type="entry name" value="Mt_carrier_dom_sf"/>
</dbReference>
<dbReference type="PANTHER" id="PTHR45618">
    <property type="entry name" value="MITOCHONDRIAL DICARBOXYLATE CARRIER-RELATED"/>
    <property type="match status" value="1"/>
</dbReference>
<dbReference type="Pfam" id="PF00153">
    <property type="entry name" value="Mito_carr"/>
    <property type="match status" value="3"/>
</dbReference>
<dbReference type="PRINTS" id="PR00926">
    <property type="entry name" value="MITOCARRIER"/>
</dbReference>
<dbReference type="SUPFAM" id="SSF103506">
    <property type="entry name" value="Mitochondrial carrier"/>
    <property type="match status" value="1"/>
</dbReference>
<dbReference type="PROSITE" id="PS50920">
    <property type="entry name" value="SOLCAR"/>
    <property type="match status" value="3"/>
</dbReference>
<reference key="1">
    <citation type="journal article" date="2008" name="Biochem. J.">
        <title>Molecular identification of three Arabidopsis thaliana mitochondrial dicarboxylate carrier isoforms: organ distribution, bacterial expression, reconstitution into liposomes and functional characterization.</title>
        <authorList>
            <person name="Palmieri L."/>
            <person name="Picault N."/>
            <person name="Arrigoni R."/>
            <person name="Besin E."/>
            <person name="Palmieri F."/>
            <person name="Hodges M."/>
        </authorList>
    </citation>
    <scope>NUCLEOTIDE SEQUENCE [MRNA]</scope>
    <scope>FUNCTION</scope>
    <scope>TISSUE SPECIFICITY</scope>
    <source>
        <strain>cv. Columbia</strain>
        <tissue>Root</tissue>
    </source>
</reference>
<reference key="2">
    <citation type="journal article" date="1999" name="Nature">
        <title>Sequence and analysis of chromosome 4 of the plant Arabidopsis thaliana.</title>
        <authorList>
            <person name="Mayer K.F.X."/>
            <person name="Schueller C."/>
            <person name="Wambutt R."/>
            <person name="Murphy G."/>
            <person name="Volckaert G."/>
            <person name="Pohl T."/>
            <person name="Duesterhoeft A."/>
            <person name="Stiekema W."/>
            <person name="Entian K.-D."/>
            <person name="Terryn N."/>
            <person name="Harris B."/>
            <person name="Ansorge W."/>
            <person name="Brandt P."/>
            <person name="Grivell L.A."/>
            <person name="Rieger M."/>
            <person name="Weichselgartner M."/>
            <person name="de Simone V."/>
            <person name="Obermaier B."/>
            <person name="Mache R."/>
            <person name="Mueller M."/>
            <person name="Kreis M."/>
            <person name="Delseny M."/>
            <person name="Puigdomenech P."/>
            <person name="Watson M."/>
            <person name="Schmidtheini T."/>
            <person name="Reichert B."/>
            <person name="Portetelle D."/>
            <person name="Perez-Alonso M."/>
            <person name="Boutry M."/>
            <person name="Bancroft I."/>
            <person name="Vos P."/>
            <person name="Hoheisel J."/>
            <person name="Zimmermann W."/>
            <person name="Wedler H."/>
            <person name="Ridley P."/>
            <person name="Langham S.-A."/>
            <person name="McCullagh B."/>
            <person name="Bilham L."/>
            <person name="Robben J."/>
            <person name="van der Schueren J."/>
            <person name="Grymonprez B."/>
            <person name="Chuang Y.-J."/>
            <person name="Vandenbussche F."/>
            <person name="Braeken M."/>
            <person name="Weltjens I."/>
            <person name="Voet M."/>
            <person name="Bastiaens I."/>
            <person name="Aert R."/>
            <person name="Defoor E."/>
            <person name="Weitzenegger T."/>
            <person name="Bothe G."/>
            <person name="Ramsperger U."/>
            <person name="Hilbert H."/>
            <person name="Braun M."/>
            <person name="Holzer E."/>
            <person name="Brandt A."/>
            <person name="Peters S."/>
            <person name="van Staveren M."/>
            <person name="Dirkse W."/>
            <person name="Mooijman P."/>
            <person name="Klein Lankhorst R."/>
            <person name="Rose M."/>
            <person name="Hauf J."/>
            <person name="Koetter P."/>
            <person name="Berneiser S."/>
            <person name="Hempel S."/>
            <person name="Feldpausch M."/>
            <person name="Lamberth S."/>
            <person name="Van den Daele H."/>
            <person name="De Keyser A."/>
            <person name="Buysshaert C."/>
            <person name="Gielen J."/>
            <person name="Villarroel R."/>
            <person name="De Clercq R."/>
            <person name="van Montagu M."/>
            <person name="Rogers J."/>
            <person name="Cronin A."/>
            <person name="Quail M.A."/>
            <person name="Bray-Allen S."/>
            <person name="Clark L."/>
            <person name="Doggett J."/>
            <person name="Hall S."/>
            <person name="Kay M."/>
            <person name="Lennard N."/>
            <person name="McLay K."/>
            <person name="Mayes R."/>
            <person name="Pettett A."/>
            <person name="Rajandream M.A."/>
            <person name="Lyne M."/>
            <person name="Benes V."/>
            <person name="Rechmann S."/>
            <person name="Borkova D."/>
            <person name="Bloecker H."/>
            <person name="Scharfe M."/>
            <person name="Grimm M."/>
            <person name="Loehnert T.-H."/>
            <person name="Dose S."/>
            <person name="de Haan M."/>
            <person name="Maarse A.C."/>
            <person name="Schaefer M."/>
            <person name="Mueller-Auer S."/>
            <person name="Gabel C."/>
            <person name="Fuchs M."/>
            <person name="Fartmann B."/>
            <person name="Granderath K."/>
            <person name="Dauner D."/>
            <person name="Herzl A."/>
            <person name="Neumann S."/>
            <person name="Argiriou A."/>
            <person name="Vitale D."/>
            <person name="Liguori R."/>
            <person name="Piravandi E."/>
            <person name="Massenet O."/>
            <person name="Quigley F."/>
            <person name="Clabauld G."/>
            <person name="Muendlein A."/>
            <person name="Felber R."/>
            <person name="Schnabl S."/>
            <person name="Hiller R."/>
            <person name="Schmidt W."/>
            <person name="Lecharny A."/>
            <person name="Aubourg S."/>
            <person name="Chefdor F."/>
            <person name="Cooke R."/>
            <person name="Berger C."/>
            <person name="Monfort A."/>
            <person name="Casacuberta E."/>
            <person name="Gibbons T."/>
            <person name="Weber N."/>
            <person name="Vandenbol M."/>
            <person name="Bargues M."/>
            <person name="Terol J."/>
            <person name="Torres A."/>
            <person name="Perez-Perez A."/>
            <person name="Purnelle B."/>
            <person name="Bent E."/>
            <person name="Johnson S."/>
            <person name="Tacon D."/>
            <person name="Jesse T."/>
            <person name="Heijnen L."/>
            <person name="Schwarz S."/>
            <person name="Scholler P."/>
            <person name="Heber S."/>
            <person name="Francs P."/>
            <person name="Bielke C."/>
            <person name="Frishman D."/>
            <person name="Haase D."/>
            <person name="Lemcke K."/>
            <person name="Mewes H.-W."/>
            <person name="Stocker S."/>
            <person name="Zaccaria P."/>
            <person name="Bevan M."/>
            <person name="Wilson R.K."/>
            <person name="de la Bastide M."/>
            <person name="Habermann K."/>
            <person name="Parnell L."/>
            <person name="Dedhia N."/>
            <person name="Gnoj L."/>
            <person name="Schutz K."/>
            <person name="Huang E."/>
            <person name="Spiegel L."/>
            <person name="Sekhon M."/>
            <person name="Murray J."/>
            <person name="Sheet P."/>
            <person name="Cordes M."/>
            <person name="Abu-Threideh J."/>
            <person name="Stoneking T."/>
            <person name="Kalicki J."/>
            <person name="Graves T."/>
            <person name="Harmon G."/>
            <person name="Edwards J."/>
            <person name="Latreille P."/>
            <person name="Courtney L."/>
            <person name="Cloud J."/>
            <person name="Abbott A."/>
            <person name="Scott K."/>
            <person name="Johnson D."/>
            <person name="Minx P."/>
            <person name="Bentley D."/>
            <person name="Fulton B."/>
            <person name="Miller N."/>
            <person name="Greco T."/>
            <person name="Kemp K."/>
            <person name="Kramer J."/>
            <person name="Fulton L."/>
            <person name="Mardis E."/>
            <person name="Dante M."/>
            <person name="Pepin K."/>
            <person name="Hillier L.W."/>
            <person name="Nelson J."/>
            <person name="Spieth J."/>
            <person name="Ryan E."/>
            <person name="Andrews S."/>
            <person name="Geisel C."/>
            <person name="Layman D."/>
            <person name="Du H."/>
            <person name="Ali J."/>
            <person name="Berghoff A."/>
            <person name="Jones K."/>
            <person name="Drone K."/>
            <person name="Cotton M."/>
            <person name="Joshu C."/>
            <person name="Antonoiu B."/>
            <person name="Zidanic M."/>
            <person name="Strong C."/>
            <person name="Sun H."/>
            <person name="Lamar B."/>
            <person name="Yordan C."/>
            <person name="Ma P."/>
            <person name="Zhong J."/>
            <person name="Preston R."/>
            <person name="Vil D."/>
            <person name="Shekher M."/>
            <person name="Matero A."/>
            <person name="Shah R."/>
            <person name="Swaby I.K."/>
            <person name="O'Shaughnessy A."/>
            <person name="Rodriguez M."/>
            <person name="Hoffman J."/>
            <person name="Till S."/>
            <person name="Granat S."/>
            <person name="Shohdy N."/>
            <person name="Hasegawa A."/>
            <person name="Hameed A."/>
            <person name="Lodhi M."/>
            <person name="Johnson A."/>
            <person name="Chen E."/>
            <person name="Marra M.A."/>
            <person name="Martienssen R."/>
            <person name="McCombie W.R."/>
        </authorList>
    </citation>
    <scope>NUCLEOTIDE SEQUENCE [LARGE SCALE GENOMIC DNA]</scope>
    <source>
        <strain>cv. Columbia</strain>
    </source>
</reference>
<reference key="3">
    <citation type="journal article" date="2017" name="Plant J.">
        <title>Araport11: a complete reannotation of the Arabidopsis thaliana reference genome.</title>
        <authorList>
            <person name="Cheng C.Y."/>
            <person name="Krishnakumar V."/>
            <person name="Chan A.P."/>
            <person name="Thibaud-Nissen F."/>
            <person name="Schobel S."/>
            <person name="Town C.D."/>
        </authorList>
    </citation>
    <scope>GENOME REANNOTATION</scope>
    <source>
        <strain>cv. Columbia</strain>
    </source>
</reference>
<reference key="4">
    <citation type="journal article" date="2003" name="Science">
        <title>Empirical analysis of transcriptional activity in the Arabidopsis genome.</title>
        <authorList>
            <person name="Yamada K."/>
            <person name="Lim J."/>
            <person name="Dale J.M."/>
            <person name="Chen H."/>
            <person name="Shinn P."/>
            <person name="Palm C.J."/>
            <person name="Southwick A.M."/>
            <person name="Wu H.C."/>
            <person name="Kim C.J."/>
            <person name="Nguyen M."/>
            <person name="Pham P.K."/>
            <person name="Cheuk R.F."/>
            <person name="Karlin-Newmann G."/>
            <person name="Liu S.X."/>
            <person name="Lam B."/>
            <person name="Sakano H."/>
            <person name="Wu T."/>
            <person name="Yu G."/>
            <person name="Miranda M."/>
            <person name="Quach H.L."/>
            <person name="Tripp M."/>
            <person name="Chang C.H."/>
            <person name="Lee J.M."/>
            <person name="Toriumi M.J."/>
            <person name="Chan M.M."/>
            <person name="Tang C.C."/>
            <person name="Onodera C.S."/>
            <person name="Deng J.M."/>
            <person name="Akiyama K."/>
            <person name="Ansari Y."/>
            <person name="Arakawa T."/>
            <person name="Banh J."/>
            <person name="Banno F."/>
            <person name="Bowser L."/>
            <person name="Brooks S.Y."/>
            <person name="Carninci P."/>
            <person name="Chao Q."/>
            <person name="Choy N."/>
            <person name="Enju A."/>
            <person name="Goldsmith A.D."/>
            <person name="Gurjal M."/>
            <person name="Hansen N.F."/>
            <person name="Hayashizaki Y."/>
            <person name="Johnson-Hopson C."/>
            <person name="Hsuan V.W."/>
            <person name="Iida K."/>
            <person name="Karnes M."/>
            <person name="Khan S."/>
            <person name="Koesema E."/>
            <person name="Ishida J."/>
            <person name="Jiang P.X."/>
            <person name="Jones T."/>
            <person name="Kawai J."/>
            <person name="Kamiya A."/>
            <person name="Meyers C."/>
            <person name="Nakajima M."/>
            <person name="Narusaka M."/>
            <person name="Seki M."/>
            <person name="Sakurai T."/>
            <person name="Satou M."/>
            <person name="Tamse R."/>
            <person name="Vaysberg M."/>
            <person name="Wallender E.K."/>
            <person name="Wong C."/>
            <person name="Yamamura Y."/>
            <person name="Yuan S."/>
            <person name="Shinozaki K."/>
            <person name="Davis R.W."/>
            <person name="Theologis A."/>
            <person name="Ecker J.R."/>
        </authorList>
    </citation>
    <scope>NUCLEOTIDE SEQUENCE [LARGE SCALE MRNA]</scope>
    <source>
        <strain>cv. Columbia</strain>
    </source>
</reference>
<reference key="5">
    <citation type="submission" date="2002-03" db="EMBL/GenBank/DDBJ databases">
        <title>Full-length cDNA from Arabidopsis thaliana.</title>
        <authorList>
            <person name="Brover V.V."/>
            <person name="Troukhan M.E."/>
            <person name="Alexandrov N.A."/>
            <person name="Lu Y.-P."/>
            <person name="Flavell R.B."/>
            <person name="Feldmann K.A."/>
        </authorList>
    </citation>
    <scope>NUCLEOTIDE SEQUENCE [LARGE SCALE MRNA]</scope>
</reference>
<reference key="6">
    <citation type="journal article" date="2006" name="J. Exp. Bot.">
        <title>The plant energy-dissipating mitochondrial systems: depicting the genomic structure and the expression profiles of the gene families of uncoupling protein and alternative oxidase in monocots and dicots.</title>
        <authorList>
            <person name="Borecky J."/>
            <person name="Nogueira F.T."/>
            <person name="de Oliveira K.A."/>
            <person name="Maia I.G."/>
            <person name="Vercesi A.E."/>
            <person name="Arruda P."/>
        </authorList>
    </citation>
    <scope>TISSUE SPECIFICITY</scope>
    <scope>INDUCTION BY COLD</scope>
    <scope>GENE FAMILY</scope>
    <scope>NOMENCLATURE</scope>
</reference>
<accession>Q9SB52</accession>
<organism>
    <name type="scientific">Arabidopsis thaliana</name>
    <name type="common">Mouse-ear cress</name>
    <dbReference type="NCBI Taxonomy" id="3702"/>
    <lineage>
        <taxon>Eukaryota</taxon>
        <taxon>Viridiplantae</taxon>
        <taxon>Streptophyta</taxon>
        <taxon>Embryophyta</taxon>
        <taxon>Tracheophyta</taxon>
        <taxon>Spermatophyta</taxon>
        <taxon>Magnoliopsida</taxon>
        <taxon>eudicotyledons</taxon>
        <taxon>Gunneridae</taxon>
        <taxon>Pentapetalae</taxon>
        <taxon>rosids</taxon>
        <taxon>malvids</taxon>
        <taxon>Brassicales</taxon>
        <taxon>Brassicaceae</taxon>
        <taxon>Camelineae</taxon>
        <taxon>Arabidopsis</taxon>
    </lineage>
</organism>
<feature type="chain" id="PRO_0000420258" description="Mitochondrial uncoupling protein 4">
    <location>
        <begin position="1"/>
        <end position="313"/>
    </location>
</feature>
<feature type="transmembrane region" description="Helical; Name=1" evidence="2">
    <location>
        <begin position="6"/>
        <end position="26"/>
    </location>
</feature>
<feature type="transmembrane region" description="Helical; Name=2" evidence="2">
    <location>
        <begin position="84"/>
        <end position="104"/>
    </location>
</feature>
<feature type="transmembrane region" description="Helical; Name=3" evidence="2">
    <location>
        <begin position="130"/>
        <end position="150"/>
    </location>
</feature>
<feature type="transmembrane region" description="Helical; Name=4" evidence="2">
    <location>
        <begin position="189"/>
        <end position="209"/>
    </location>
</feature>
<feature type="transmembrane region" description="Helical; Name=5" evidence="2">
    <location>
        <begin position="230"/>
        <end position="250"/>
    </location>
</feature>
<feature type="transmembrane region" description="Helical; Name=6" evidence="2">
    <location>
        <begin position="282"/>
        <end position="302"/>
    </location>
</feature>
<feature type="repeat" description="Solcar 1">
    <location>
        <begin position="4"/>
        <end position="115"/>
    </location>
</feature>
<feature type="repeat" description="Solcar 2">
    <location>
        <begin position="124"/>
        <end position="215"/>
    </location>
</feature>
<feature type="repeat" description="Solcar 3">
    <location>
        <begin position="224"/>
        <end position="309"/>
    </location>
</feature>
<evidence type="ECO:0000250" key="1"/>
<evidence type="ECO:0000255" key="2"/>
<evidence type="ECO:0000269" key="3">
    <source>
    </source>
</evidence>
<evidence type="ECO:0000269" key="4">
    <source>
    </source>
</evidence>
<evidence type="ECO:0000305" key="5"/>
<protein>
    <recommendedName>
        <fullName>Mitochondrial uncoupling protein 4</fullName>
        <shortName>AtPUMP4</shortName>
    </recommendedName>
    <alternativeName>
        <fullName>Mitochondrial dicarboxylate carrier 2</fullName>
    </alternativeName>
</protein>